<feature type="chain" id="PRO_0000347497" description="Alanine--tRNA ligase">
    <location>
        <begin position="1"/>
        <end position="878"/>
    </location>
</feature>
<feature type="binding site" evidence="1">
    <location>
        <position position="566"/>
    </location>
    <ligand>
        <name>Zn(2+)</name>
        <dbReference type="ChEBI" id="CHEBI:29105"/>
    </ligand>
</feature>
<feature type="binding site" evidence="1">
    <location>
        <position position="570"/>
    </location>
    <ligand>
        <name>Zn(2+)</name>
        <dbReference type="ChEBI" id="CHEBI:29105"/>
    </ligand>
</feature>
<feature type="binding site" evidence="1">
    <location>
        <position position="668"/>
    </location>
    <ligand>
        <name>Zn(2+)</name>
        <dbReference type="ChEBI" id="CHEBI:29105"/>
    </ligand>
</feature>
<feature type="binding site" evidence="1">
    <location>
        <position position="672"/>
    </location>
    <ligand>
        <name>Zn(2+)</name>
        <dbReference type="ChEBI" id="CHEBI:29105"/>
    </ligand>
</feature>
<keyword id="KW-0030">Aminoacyl-tRNA synthetase</keyword>
<keyword id="KW-0067">ATP-binding</keyword>
<keyword id="KW-0963">Cytoplasm</keyword>
<keyword id="KW-0436">Ligase</keyword>
<keyword id="KW-0479">Metal-binding</keyword>
<keyword id="KW-0547">Nucleotide-binding</keyword>
<keyword id="KW-0648">Protein biosynthesis</keyword>
<keyword id="KW-0694">RNA-binding</keyword>
<keyword id="KW-0820">tRNA-binding</keyword>
<keyword id="KW-0862">Zinc</keyword>
<protein>
    <recommendedName>
        <fullName evidence="1">Alanine--tRNA ligase</fullName>
        <ecNumber evidence="1">6.1.1.7</ecNumber>
    </recommendedName>
    <alternativeName>
        <fullName evidence="1">Alanyl-tRNA synthetase</fullName>
        <shortName evidence="1">AlaRS</shortName>
    </alternativeName>
</protein>
<organism>
    <name type="scientific">Bacillus velezensis (strain DSM 23117 / BGSC 10A6 / LMG 26770 / FZB42)</name>
    <name type="common">Bacillus amyloliquefaciens subsp. plantarum</name>
    <dbReference type="NCBI Taxonomy" id="326423"/>
    <lineage>
        <taxon>Bacteria</taxon>
        <taxon>Bacillati</taxon>
        <taxon>Bacillota</taxon>
        <taxon>Bacilli</taxon>
        <taxon>Bacillales</taxon>
        <taxon>Bacillaceae</taxon>
        <taxon>Bacillus</taxon>
        <taxon>Bacillus amyloliquefaciens group</taxon>
    </lineage>
</organism>
<name>SYA_BACVZ</name>
<comment type="function">
    <text evidence="1">Catalyzes the attachment of alanine to tRNA(Ala) in a two-step reaction: alanine is first activated by ATP to form Ala-AMP and then transferred to the acceptor end of tRNA(Ala). Also edits incorrectly charged Ser-tRNA(Ala) and Gly-tRNA(Ala) via its editing domain.</text>
</comment>
<comment type="catalytic activity">
    <reaction evidence="1">
        <text>tRNA(Ala) + L-alanine + ATP = L-alanyl-tRNA(Ala) + AMP + diphosphate</text>
        <dbReference type="Rhea" id="RHEA:12540"/>
        <dbReference type="Rhea" id="RHEA-COMP:9657"/>
        <dbReference type="Rhea" id="RHEA-COMP:9923"/>
        <dbReference type="ChEBI" id="CHEBI:30616"/>
        <dbReference type="ChEBI" id="CHEBI:33019"/>
        <dbReference type="ChEBI" id="CHEBI:57972"/>
        <dbReference type="ChEBI" id="CHEBI:78442"/>
        <dbReference type="ChEBI" id="CHEBI:78497"/>
        <dbReference type="ChEBI" id="CHEBI:456215"/>
        <dbReference type="EC" id="6.1.1.7"/>
    </reaction>
</comment>
<comment type="cofactor">
    <cofactor evidence="1">
        <name>Zn(2+)</name>
        <dbReference type="ChEBI" id="CHEBI:29105"/>
    </cofactor>
    <text evidence="1">Binds 1 zinc ion per subunit.</text>
</comment>
<comment type="subcellular location">
    <subcellularLocation>
        <location evidence="1">Cytoplasm</location>
    </subcellularLocation>
</comment>
<comment type="domain">
    <text evidence="1">Consists of three domains; the N-terminal catalytic domain, the editing domain and the C-terminal C-Ala domain. The editing domain removes incorrectly charged amino acids, while the C-Ala domain, along with tRNA(Ala), serves as a bridge to cooperatively bring together the editing and aminoacylation centers thus stimulating deacylation of misacylated tRNAs.</text>
</comment>
<comment type="similarity">
    <text evidence="1">Belongs to the class-II aminoacyl-tRNA synthetase family.</text>
</comment>
<accession>A7Z735</accession>
<sequence>MKHLTSAEVRQMFLDFFKEKGHAVEPSASLVPHEDPSLLWINSGVATLKKYFDGRVVPENPRIVNAQKSIRTNDIENVGKTARHHTFFEMLGNFSIGDYFKEEAITWAWEFLTSEKWIGFDPELLSVTVHPEDEEAYTLWAEKIGVPEERIIRLEGNFWDIGEGPSGPNTEIFYDRGEKYGNDPSDSELYPGGENDRYLEVWNLVFSEFNHNPDGTYTPLPKKNIDTGMGLERMVSVIQDVSTNFDTDLFMPIIEATERISGDAYGKDAVKDTAFKVIADHIRTVAFAVSDGALPSNEGRGYVLRRLLRRAVRYAKTLGISRPFMYELVPTVAGIMDAFYPEVKEKQEFIAKVIKTEEERFHETLNEGLAILSDVIKKEKEKGSGIISGKDVFKLYDTYGFPVELTEEYAEDEQMTVDHKGFEAEMEKQRERARNARQDVGSMQVQGGALRDITAESTFVGYSAVKAEAKVIELLHDGQLISEAHEGDTVQILLDKTPFYAESGGQIGDRGVLRSEQAVVTIKDVKKAPNGQHVHEGTVDSGTIQKGASVTAEVEDQMRSGVVKNHTATHLLHQALKDVLGTHVNQAGSLVTENRLRFDFSHFGQVTKEELERIEGIVNEKIWESIPVAIDLKPINEAKEMGAMALFGEKYGDIVRVVQVGDYSLELCGGCHVTNTAEIGLFKIVSESGIGAGTRRIEAVTGKGAYQEMNSQLSLLQHAADELKSNVKDVPKRIQSLQAELKEAQRENESLLSKLGNVEAGAILSKVKDIGGVKVLAEKVNAKDMNHLRTMVDDLKAKLGSAVIILGAVQNEKVNLSAGVTKDLIEKGLHAGKMVKQAAEVCGGGGGGRPDMAQAGGKHPEKLEEALASAVDWIKSVL</sequence>
<evidence type="ECO:0000255" key="1">
    <source>
        <dbReference type="HAMAP-Rule" id="MF_00036"/>
    </source>
</evidence>
<gene>
    <name evidence="1" type="primary">alaS</name>
    <name type="ordered locus">RBAM_024510</name>
</gene>
<proteinExistence type="inferred from homology"/>
<dbReference type="EC" id="6.1.1.7" evidence="1"/>
<dbReference type="EMBL" id="CP000560">
    <property type="protein sequence ID" value="ABS74811.1"/>
    <property type="molecule type" value="Genomic_DNA"/>
</dbReference>
<dbReference type="RefSeq" id="WP_012118071.1">
    <property type="nucleotide sequence ID" value="NC_009725.2"/>
</dbReference>
<dbReference type="SMR" id="A7Z735"/>
<dbReference type="GeneID" id="93081591"/>
<dbReference type="KEGG" id="bay:RBAM_024510"/>
<dbReference type="HOGENOM" id="CLU_004485_1_1_9"/>
<dbReference type="Proteomes" id="UP000001120">
    <property type="component" value="Chromosome"/>
</dbReference>
<dbReference type="GO" id="GO:0005829">
    <property type="term" value="C:cytosol"/>
    <property type="evidence" value="ECO:0007669"/>
    <property type="project" value="TreeGrafter"/>
</dbReference>
<dbReference type="GO" id="GO:0004813">
    <property type="term" value="F:alanine-tRNA ligase activity"/>
    <property type="evidence" value="ECO:0007669"/>
    <property type="project" value="UniProtKB-UniRule"/>
</dbReference>
<dbReference type="GO" id="GO:0002161">
    <property type="term" value="F:aminoacyl-tRNA deacylase activity"/>
    <property type="evidence" value="ECO:0007669"/>
    <property type="project" value="TreeGrafter"/>
</dbReference>
<dbReference type="GO" id="GO:0005524">
    <property type="term" value="F:ATP binding"/>
    <property type="evidence" value="ECO:0007669"/>
    <property type="project" value="UniProtKB-UniRule"/>
</dbReference>
<dbReference type="GO" id="GO:0140096">
    <property type="term" value="F:catalytic activity, acting on a protein"/>
    <property type="evidence" value="ECO:0007669"/>
    <property type="project" value="UniProtKB-ARBA"/>
</dbReference>
<dbReference type="GO" id="GO:0016740">
    <property type="term" value="F:transferase activity"/>
    <property type="evidence" value="ECO:0007669"/>
    <property type="project" value="UniProtKB-ARBA"/>
</dbReference>
<dbReference type="GO" id="GO:0000049">
    <property type="term" value="F:tRNA binding"/>
    <property type="evidence" value="ECO:0007669"/>
    <property type="project" value="UniProtKB-KW"/>
</dbReference>
<dbReference type="GO" id="GO:0008270">
    <property type="term" value="F:zinc ion binding"/>
    <property type="evidence" value="ECO:0007669"/>
    <property type="project" value="UniProtKB-UniRule"/>
</dbReference>
<dbReference type="GO" id="GO:0006419">
    <property type="term" value="P:alanyl-tRNA aminoacylation"/>
    <property type="evidence" value="ECO:0007669"/>
    <property type="project" value="UniProtKB-UniRule"/>
</dbReference>
<dbReference type="CDD" id="cd00673">
    <property type="entry name" value="AlaRS_core"/>
    <property type="match status" value="1"/>
</dbReference>
<dbReference type="FunFam" id="2.40.30.130:FF:000001">
    <property type="entry name" value="Alanine--tRNA ligase"/>
    <property type="match status" value="1"/>
</dbReference>
<dbReference type="FunFam" id="3.10.310.40:FF:000001">
    <property type="entry name" value="Alanine--tRNA ligase"/>
    <property type="match status" value="1"/>
</dbReference>
<dbReference type="FunFam" id="3.30.54.20:FF:000001">
    <property type="entry name" value="Alanine--tRNA ligase"/>
    <property type="match status" value="1"/>
</dbReference>
<dbReference type="FunFam" id="3.30.930.10:FF:000046">
    <property type="entry name" value="Alanine--tRNA ligase"/>
    <property type="match status" value="1"/>
</dbReference>
<dbReference type="FunFam" id="3.30.980.10:FF:000004">
    <property type="entry name" value="Alanine--tRNA ligase, cytoplasmic"/>
    <property type="match status" value="1"/>
</dbReference>
<dbReference type="Gene3D" id="2.40.30.130">
    <property type="match status" value="1"/>
</dbReference>
<dbReference type="Gene3D" id="3.10.310.40">
    <property type="match status" value="1"/>
</dbReference>
<dbReference type="Gene3D" id="3.30.54.20">
    <property type="match status" value="1"/>
</dbReference>
<dbReference type="Gene3D" id="6.10.250.550">
    <property type="match status" value="1"/>
</dbReference>
<dbReference type="Gene3D" id="3.30.930.10">
    <property type="entry name" value="Bira Bifunctional Protein, Domain 2"/>
    <property type="match status" value="1"/>
</dbReference>
<dbReference type="Gene3D" id="3.30.980.10">
    <property type="entry name" value="Threonyl-trna Synthetase, Chain A, domain 2"/>
    <property type="match status" value="1"/>
</dbReference>
<dbReference type="HAMAP" id="MF_00036_B">
    <property type="entry name" value="Ala_tRNA_synth_B"/>
    <property type="match status" value="1"/>
</dbReference>
<dbReference type="InterPro" id="IPR045864">
    <property type="entry name" value="aa-tRNA-synth_II/BPL/LPL"/>
</dbReference>
<dbReference type="InterPro" id="IPR002318">
    <property type="entry name" value="Ala-tRNA-lgiase_IIc"/>
</dbReference>
<dbReference type="InterPro" id="IPR018162">
    <property type="entry name" value="Ala-tRNA-ligase_IIc_anticod-bd"/>
</dbReference>
<dbReference type="InterPro" id="IPR018165">
    <property type="entry name" value="Ala-tRNA-synth_IIc_core"/>
</dbReference>
<dbReference type="InterPro" id="IPR018164">
    <property type="entry name" value="Ala-tRNA-synth_IIc_N"/>
</dbReference>
<dbReference type="InterPro" id="IPR050058">
    <property type="entry name" value="Ala-tRNA_ligase"/>
</dbReference>
<dbReference type="InterPro" id="IPR023033">
    <property type="entry name" value="Ala_tRNA_ligase_euk/bac"/>
</dbReference>
<dbReference type="InterPro" id="IPR003156">
    <property type="entry name" value="DHHA1_dom"/>
</dbReference>
<dbReference type="InterPro" id="IPR018163">
    <property type="entry name" value="Thr/Ala-tRNA-synth_IIc_edit"/>
</dbReference>
<dbReference type="InterPro" id="IPR009000">
    <property type="entry name" value="Transl_B-barrel_sf"/>
</dbReference>
<dbReference type="InterPro" id="IPR012947">
    <property type="entry name" value="tRNA_SAD"/>
</dbReference>
<dbReference type="NCBIfam" id="TIGR00344">
    <property type="entry name" value="alaS"/>
    <property type="match status" value="1"/>
</dbReference>
<dbReference type="PANTHER" id="PTHR11777:SF9">
    <property type="entry name" value="ALANINE--TRNA LIGASE, CYTOPLASMIC"/>
    <property type="match status" value="1"/>
</dbReference>
<dbReference type="PANTHER" id="PTHR11777">
    <property type="entry name" value="ALANYL-TRNA SYNTHETASE"/>
    <property type="match status" value="1"/>
</dbReference>
<dbReference type="Pfam" id="PF02272">
    <property type="entry name" value="DHHA1"/>
    <property type="match status" value="1"/>
</dbReference>
<dbReference type="Pfam" id="PF01411">
    <property type="entry name" value="tRNA-synt_2c"/>
    <property type="match status" value="1"/>
</dbReference>
<dbReference type="Pfam" id="PF07973">
    <property type="entry name" value="tRNA_SAD"/>
    <property type="match status" value="1"/>
</dbReference>
<dbReference type="PRINTS" id="PR00980">
    <property type="entry name" value="TRNASYNTHALA"/>
</dbReference>
<dbReference type="SMART" id="SM00863">
    <property type="entry name" value="tRNA_SAD"/>
    <property type="match status" value="1"/>
</dbReference>
<dbReference type="SUPFAM" id="SSF55681">
    <property type="entry name" value="Class II aaRS and biotin synthetases"/>
    <property type="match status" value="1"/>
</dbReference>
<dbReference type="SUPFAM" id="SSF101353">
    <property type="entry name" value="Putative anticodon-binding domain of alanyl-tRNA synthetase (AlaRS)"/>
    <property type="match status" value="1"/>
</dbReference>
<dbReference type="SUPFAM" id="SSF55186">
    <property type="entry name" value="ThrRS/AlaRS common domain"/>
    <property type="match status" value="1"/>
</dbReference>
<dbReference type="SUPFAM" id="SSF50447">
    <property type="entry name" value="Translation proteins"/>
    <property type="match status" value="1"/>
</dbReference>
<dbReference type="PROSITE" id="PS50860">
    <property type="entry name" value="AA_TRNA_LIGASE_II_ALA"/>
    <property type="match status" value="1"/>
</dbReference>
<reference key="1">
    <citation type="journal article" date="2007" name="Nat. Biotechnol.">
        <title>Comparative analysis of the complete genome sequence of the plant growth-promoting bacterium Bacillus amyloliquefaciens FZB42.</title>
        <authorList>
            <person name="Chen X.H."/>
            <person name="Koumoutsi A."/>
            <person name="Scholz R."/>
            <person name="Eisenreich A."/>
            <person name="Schneider K."/>
            <person name="Heinemeyer I."/>
            <person name="Morgenstern B."/>
            <person name="Voss B."/>
            <person name="Hess W.R."/>
            <person name="Reva O."/>
            <person name="Junge H."/>
            <person name="Voigt B."/>
            <person name="Jungblut P.R."/>
            <person name="Vater J."/>
            <person name="Suessmuth R."/>
            <person name="Liesegang H."/>
            <person name="Strittmatter A."/>
            <person name="Gottschalk G."/>
            <person name="Borriss R."/>
        </authorList>
    </citation>
    <scope>NUCLEOTIDE SEQUENCE [LARGE SCALE GENOMIC DNA]</scope>
    <source>
        <strain>DSM 23117 / BGSC 10A6 / LMG 26770 / FZB42</strain>
    </source>
</reference>